<protein>
    <recommendedName>
        <fullName>Matrix protein</fullName>
    </recommendedName>
    <alternativeName>
        <fullName>Phosphoprotein M2</fullName>
    </alternativeName>
</protein>
<comment type="function">
    <text evidence="2 6 8 9">Plays a major role in assembly, budding and uncoating of virion after membrane fusion (PubMed:33208464). Completely covers the ribonucleoprotein coil and keep it in condensed bullet-shaped form. Inhibits viral transcription and stimulates replication. Plays a major role in early induction of TRAIL-mediated apoptosis in infected neurons (PubMed:12771432, PubMed:9847327). Inhibits the integrated stress response (ISR) in the infected cell by blocking the formation of stress granules (By similarity).</text>
</comment>
<comment type="subunit">
    <text evidence="8 9">Homomultimer. Interacts with nucleoprotein and with the cytoplasmic domain of glycoprotein (PubMed:9847327). Interacts with host ATP6V1A; this interaction plays an important role in virion uncoating after viral entry (PubMed:33208464).</text>
</comment>
<comment type="subcellular location">
    <subcellularLocation>
        <location>Virion membrane</location>
        <topology>Peripheral membrane protein</topology>
    </subcellularLocation>
    <subcellularLocation>
        <location>Host endomembrane system</location>
        <topology>Peripheral membrane protein</topology>
    </subcellularLocation>
    <subcellularLocation>
        <location evidence="8">Host cytoplasm</location>
    </subcellularLocation>
</comment>
<comment type="domain">
    <text evidence="10">Late-budding domains (L domains) are short sequence motifs essential for viral particle budding. They recruit proteins of the host ESCRT machinery (Endosomal Sorting Complex Required for Transport) or ESCRT-associated proteins. Matrix protein contains one L domain: a PPXY motif which potentially interacts with the WW domain 3 of NEDD4 E3 ubiquitin ligase (Potential).</text>
</comment>
<comment type="miscellaneous">
    <text evidence="1">Most abundant protein in the virion.</text>
</comment>
<comment type="similarity">
    <text evidence="10">Belongs to the lyssavirus matrix protein family.</text>
</comment>
<name>MATRX_RABVS</name>
<dbReference type="EMBL" id="M31046">
    <property type="protein sequence ID" value="AAA47201.1"/>
    <property type="molecule type" value="Genomic_RNA"/>
</dbReference>
<dbReference type="EMBL" id="AF499686">
    <property type="protein sequence ID" value="AAT48625.1"/>
    <property type="molecule type" value="Genomic_RNA"/>
</dbReference>
<dbReference type="EMBL" id="EF206708">
    <property type="protein sequence ID" value="ABN11298.1"/>
    <property type="molecule type" value="Genomic_RNA"/>
</dbReference>
<dbReference type="EMBL" id="EF206709">
    <property type="protein sequence ID" value="ABN11303.1"/>
    <property type="molecule type" value="Genomic_RNA"/>
</dbReference>
<dbReference type="EMBL" id="EF206710">
    <property type="protein sequence ID" value="ABN11308.1"/>
    <property type="molecule type" value="Genomic_RNA"/>
</dbReference>
<dbReference type="EMBL" id="EF206711">
    <property type="protein sequence ID" value="ABN11313.1"/>
    <property type="molecule type" value="Genomic_RNA"/>
</dbReference>
<dbReference type="EMBL" id="EF206712">
    <property type="protein sequence ID" value="ABN11318.1"/>
    <property type="molecule type" value="Genomic_RNA"/>
</dbReference>
<dbReference type="EMBL" id="EF206713">
    <property type="protein sequence ID" value="ABN11323.1"/>
    <property type="molecule type" value="Genomic_RNA"/>
</dbReference>
<dbReference type="EMBL" id="EF206714">
    <property type="protein sequence ID" value="ABN11328.1"/>
    <property type="molecule type" value="Genomic_RNA"/>
</dbReference>
<dbReference type="EMBL" id="EF206715">
    <property type="protein sequence ID" value="ABN11333.1"/>
    <property type="molecule type" value="Genomic_RNA"/>
</dbReference>
<dbReference type="EMBL" id="EF206716">
    <property type="protein sequence ID" value="ABN11338.1"/>
    <property type="molecule type" value="Genomic_RNA"/>
</dbReference>
<dbReference type="EMBL" id="EF206717">
    <property type="protein sequence ID" value="ABN11343.1"/>
    <property type="molecule type" value="Genomic_RNA"/>
</dbReference>
<dbReference type="EMBL" id="EF206718">
    <property type="protein sequence ID" value="ABN11348.1"/>
    <property type="molecule type" value="Genomic_RNA"/>
</dbReference>
<dbReference type="EMBL" id="EF206719">
    <property type="protein sequence ID" value="ABN11353.1"/>
    <property type="molecule type" value="Genomic_RNA"/>
</dbReference>
<dbReference type="EMBL" id="EF206720">
    <property type="protein sequence ID" value="ABN11358.1"/>
    <property type="molecule type" value="Genomic_RNA"/>
</dbReference>
<dbReference type="PIR" id="C34746">
    <property type="entry name" value="MFVNSB"/>
</dbReference>
<dbReference type="SMR" id="P16287"/>
<dbReference type="ELM" id="P16287"/>
<dbReference type="IntAct" id="P16287">
    <property type="interactions" value="6"/>
</dbReference>
<dbReference type="TCDB" id="9.A.73.3.1">
    <property type="family name" value="the virus matrix protein (vmp) family"/>
</dbReference>
<dbReference type="Proteomes" id="UP000006363">
    <property type="component" value="Genome"/>
</dbReference>
<dbReference type="Proteomes" id="UP000007308">
    <property type="component" value="Genome"/>
</dbReference>
<dbReference type="Proteomes" id="UP000100286">
    <property type="component" value="Genome"/>
</dbReference>
<dbReference type="Proteomes" id="UP000107382">
    <property type="component" value="Genome"/>
</dbReference>
<dbReference type="Proteomes" id="UP000115894">
    <property type="component" value="Genome"/>
</dbReference>
<dbReference type="Proteomes" id="UP000118099">
    <property type="component" value="Genome"/>
</dbReference>
<dbReference type="Proteomes" id="UP000123862">
    <property type="component" value="Genome"/>
</dbReference>
<dbReference type="Proteomes" id="UP000132522">
    <property type="component" value="Genome"/>
</dbReference>
<dbReference type="Proteomes" id="UP000133682">
    <property type="component" value="Genome"/>
</dbReference>
<dbReference type="Proteomes" id="UP000142143">
    <property type="component" value="Genome"/>
</dbReference>
<dbReference type="Proteomes" id="UP000151156">
    <property type="component" value="Genome"/>
</dbReference>
<dbReference type="Proteomes" id="UP000167748">
    <property type="component" value="Genome"/>
</dbReference>
<dbReference type="Proteomes" id="UP000172072">
    <property type="component" value="Genome"/>
</dbReference>
<dbReference type="Proteomes" id="UP000174835">
    <property type="component" value="Genome"/>
</dbReference>
<dbReference type="Proteomes" id="UP000175378">
    <property type="component" value="Genome"/>
</dbReference>
<dbReference type="GO" id="GO:0030430">
    <property type="term" value="C:host cell cytoplasm"/>
    <property type="evidence" value="ECO:0007669"/>
    <property type="project" value="UniProtKB-SubCell"/>
</dbReference>
<dbReference type="GO" id="GO:0033645">
    <property type="term" value="C:host cell endomembrane system"/>
    <property type="evidence" value="ECO:0007669"/>
    <property type="project" value="UniProtKB-SubCell"/>
</dbReference>
<dbReference type="GO" id="GO:0016020">
    <property type="term" value="C:membrane"/>
    <property type="evidence" value="ECO:0007669"/>
    <property type="project" value="UniProtKB-KW"/>
</dbReference>
<dbReference type="GO" id="GO:0019031">
    <property type="term" value="C:viral envelope"/>
    <property type="evidence" value="ECO:0007669"/>
    <property type="project" value="UniProtKB-KW"/>
</dbReference>
<dbReference type="GO" id="GO:0055036">
    <property type="term" value="C:virion membrane"/>
    <property type="evidence" value="ECO:0007669"/>
    <property type="project" value="UniProtKB-SubCell"/>
</dbReference>
<dbReference type="GO" id="GO:0039660">
    <property type="term" value="F:structural constituent of virion"/>
    <property type="evidence" value="ECO:0007669"/>
    <property type="project" value="UniProtKB-KW"/>
</dbReference>
<dbReference type="GO" id="GO:0032897">
    <property type="term" value="P:negative regulation of viral transcription"/>
    <property type="evidence" value="ECO:0000315"/>
    <property type="project" value="CACAO"/>
</dbReference>
<dbReference type="GO" id="GO:0039702">
    <property type="term" value="P:viral budding via host ESCRT complex"/>
    <property type="evidence" value="ECO:0007669"/>
    <property type="project" value="UniProtKB-KW"/>
</dbReference>
<dbReference type="FunFam" id="3.10.460.20:FF:000001">
    <property type="entry name" value="Matrix protein"/>
    <property type="match status" value="1"/>
</dbReference>
<dbReference type="Gene3D" id="3.10.460.20">
    <property type="entry name" value="Rhabdovirus matrix protein M2"/>
    <property type="match status" value="1"/>
</dbReference>
<dbReference type="InterPro" id="IPR006870">
    <property type="entry name" value="Rhabdo_M"/>
</dbReference>
<dbReference type="InterPro" id="IPR038617">
    <property type="entry name" value="Rhabdovirus_M_sf"/>
</dbReference>
<dbReference type="Pfam" id="PF04785">
    <property type="entry name" value="Rhabdo_M2"/>
    <property type="match status" value="1"/>
</dbReference>
<organism>
    <name type="scientific">Rabies virus (strain SAD B19)</name>
    <name type="common">RABV</name>
    <dbReference type="NCBI Taxonomy" id="11300"/>
    <lineage>
        <taxon>Viruses</taxon>
        <taxon>Riboviria</taxon>
        <taxon>Orthornavirae</taxon>
        <taxon>Negarnaviricota</taxon>
        <taxon>Haploviricotina</taxon>
        <taxon>Monjiviricetes</taxon>
        <taxon>Mononegavirales</taxon>
        <taxon>Rhabdoviridae</taxon>
        <taxon>Alpharhabdovirinae</taxon>
        <taxon>Lyssavirus</taxon>
        <taxon>Lyssavirus rabies</taxon>
    </lineage>
</organism>
<sequence length="202" mass="23341">MNLLRKIVKNRRDEDTQKSSPASAPLDDDDLWLPPPEYVPLKELTGKKNMRNFCINGRVKVCSPNGYSFRILRHILKSFDEIYSGNHRMIGLVKVVIGLALSGSPVPEGLNWVYKLRRTFIFQWADSRGPLEGEELEYSQEITWDDDTEFVGLQIRVIAKQCHIQGRVWCINMNPRACQLWSDMSLQTQRSEEDKDSSLLLE</sequence>
<feature type="chain" id="PRO_0000222851" description="Matrix protein">
    <location>
        <begin position="1"/>
        <end position="202"/>
    </location>
</feature>
<feature type="region of interest" description="Disordered" evidence="4">
    <location>
        <begin position="9"/>
        <end position="31"/>
    </location>
</feature>
<feature type="region of interest" description="Essential for glycoprotein binding" evidence="1">
    <location>
        <begin position="115"/>
        <end position="151"/>
    </location>
</feature>
<feature type="short sequence motif" description="PPXY motif" evidence="3">
    <location>
        <begin position="35"/>
        <end position="38"/>
    </location>
</feature>
<feature type="site" description="Involved in the inhibition of stress granules formation and contributes therefore to virulence" evidence="2">
    <location>
        <position position="95"/>
    </location>
</feature>
<feature type="sequence variant" description="In strain: Isolate SAD1-3670 var 1 and Isolate SAD1-3670 var 2.">
    <original>N</original>
    <variation>D</variation>
    <location>
        <position position="2"/>
    </location>
</feature>
<feature type="sequence variant" description="In strain: Isolate SAD1-3670 var 1 and Isolate SAD1-3670 var 2.">
    <original>R</original>
    <variation>C</variation>
    <location>
        <position position="11"/>
    </location>
</feature>
<feature type="sequence variant" description="In strain: Isolate SAD1-3670 var 1 and Isolate SAD1-3670 var 2.">
    <original>S</original>
    <variation>P</variation>
    <location>
        <position position="19"/>
    </location>
</feature>
<feature type="sequence variant" description="In strain: Isolate SAD1-3670 var 1 and Isolate SAD1-3670 var 2.">
    <original>A</original>
    <variation>V</variation>
    <location>
        <position position="22"/>
    </location>
</feature>
<feature type="sequence variant" description="In strain: Isolate SAD1-3670 var 1 and Isolate SAD1-3670 var 2.">
    <original>G</original>
    <variation>S</variation>
    <location>
        <position position="46"/>
    </location>
</feature>
<feature type="sequence variant" description="In strain: Isolate SAD1-3670 var 1 and Isolate SAD1-3670 var 2.">
    <original>R</original>
    <variation>G</variation>
    <location>
        <position position="58"/>
    </location>
</feature>
<feature type="sequence variant" description="In strain: Isolate SAD1-3670 var 1 and Isolate SAD1-3670 var 2.">
    <original>L</original>
    <variation>M</variation>
    <location>
        <position position="110"/>
    </location>
</feature>
<feature type="sequence variant" description="In strain: Isolate SAD1-3670 var 1 and Isolate SAD1-3670 var 2.">
    <original>F</original>
    <variation>L</variation>
    <location>
        <position position="120"/>
    </location>
</feature>
<feature type="sequence variant" description="In strain: Isolate SAD1-3670 var 1 and Isolate SAD1-3670 var 2.">
    <original>I</original>
    <variation>S</variation>
    <location>
        <position position="158"/>
    </location>
</feature>
<feature type="sequence variant" description="In strain: Isolate SAD1-3670 var 1 and Isolate SAD1-3670 var 2.">
    <original>V</original>
    <variation>I</variation>
    <location>
        <position position="168"/>
    </location>
</feature>
<feature type="mutagenesis site" description="Complete loss of interaction with WW domain in vitro." evidence="5">
    <original>Y</original>
    <variation>A</variation>
    <location>
        <position position="38"/>
    </location>
</feature>
<feature type="mutagenesis site" description="Complete loss of viral transcription inhibition." evidence="7">
    <original>R</original>
    <variation>G</variation>
    <location>
        <position position="58"/>
    </location>
</feature>
<gene>
    <name type="primary">M</name>
</gene>
<organismHost>
    <name type="scientific">Homo sapiens</name>
    <name type="common">Human</name>
    <dbReference type="NCBI Taxonomy" id="9606"/>
</organismHost>
<organismHost>
    <name type="scientific">Mammalia</name>
    <dbReference type="NCBI Taxonomy" id="40674"/>
</organismHost>
<accession>P16287</accession>
<accession>A3F5L7</accession>
<accession>A3F5R7</accession>
<accession>A3F5T2</accession>
<accession>P13616</accession>
<accession>Q6HA96</accession>
<keyword id="KW-0053">Apoptosis</keyword>
<keyword id="KW-1035">Host cytoplasm</keyword>
<keyword id="KW-1043">Host membrane</keyword>
<keyword id="KW-0945">Host-virus interaction</keyword>
<keyword id="KW-0472">Membrane</keyword>
<keyword id="KW-1198">Viral budding</keyword>
<keyword id="KW-1187">Viral budding via the host ESCRT complexes</keyword>
<keyword id="KW-0261">Viral envelope protein</keyword>
<keyword id="KW-0468">Viral matrix protein</keyword>
<keyword id="KW-1188">Viral release from host cell</keyword>
<keyword id="KW-0946">Virion</keyword>
<proteinExistence type="evidence at protein level"/>
<evidence type="ECO:0000250" key="1"/>
<evidence type="ECO:0000250" key="2">
    <source>
        <dbReference type="UniProtKB" id="P25224"/>
    </source>
</evidence>
<evidence type="ECO:0000255" key="3"/>
<evidence type="ECO:0000256" key="4">
    <source>
        <dbReference type="SAM" id="MobiDB-lite"/>
    </source>
</evidence>
<evidence type="ECO:0000269" key="5">
    <source>
    </source>
</evidence>
<evidence type="ECO:0000269" key="6">
    <source>
    </source>
</evidence>
<evidence type="ECO:0000269" key="7">
    <source>
    </source>
</evidence>
<evidence type="ECO:0000269" key="8">
    <source>
    </source>
</evidence>
<evidence type="ECO:0000269" key="9">
    <source>
    </source>
</evidence>
<evidence type="ECO:0000305" key="10"/>
<reference key="1">
    <citation type="journal article" date="1990" name="Virology">
        <title>Molecular cloning and complete nucleotide sequence of the attenuated rabies virus SAD B19.</title>
        <authorList>
            <person name="Conzelmann K.-K."/>
            <person name="Cox J.H."/>
            <person name="Schneider L.G."/>
            <person name="Thiel H.-J."/>
        </authorList>
    </citation>
    <scope>NUCLEOTIDE SEQUENCE [GENOMIC RNA]</scope>
</reference>
<reference key="2">
    <citation type="submission" date="2004-04" db="EMBL/GenBank/DDBJ databases">
        <title>Analysis of the whole sequence of rabies virus vaccine strain SRV9.</title>
        <authorList>
            <person name="Wang T."/>
            <person name="Zhang S."/>
            <person name="Hu R."/>
        </authorList>
    </citation>
    <scope>NUCLEOTIDE SEQUENCE [GENOMIC RNA]</scope>
    <source>
        <strain>SRV9</strain>
    </source>
</reference>
<reference key="3">
    <citation type="submission" date="2007-01" db="EMBL/GenBank/DDBJ databases">
        <title>Complete nucleotide sequencing of SAD derivatives of attenuated rabies virus vaccine strains.</title>
        <authorList>
            <person name="Geue L."/>
            <person name="Schares S."/>
            <person name="Schnick C."/>
            <person name="Kliemt J."/>
            <person name="Beckert A."/>
            <person name="Hoffmann B."/>
            <person name="Freuling C."/>
            <person name="Marston D."/>
            <person name="McElhinney L."/>
            <person name="Fooks A."/>
            <person name="Zanoni R."/>
            <person name="Peterhans E."/>
            <person name="Cox J."/>
            <person name="Mueller T."/>
        </authorList>
    </citation>
    <scope>NUCLEOTIDE SEQUENCE [GENOMIC RNA]</scope>
    <source>
        <strain>Isolate SAD B19</strain>
        <strain>Isolate SAD Bern</strain>
        <strain>Isolate SAD Bern original var 1</strain>
        <strain>Isolate SAD Bern original var 2</strain>
        <strain>Isolate SAD Bern original var 3</strain>
        <strain>Isolate SAD Bern original var 4</strain>
        <strain>Isolate SAD Bern original var 5</strain>
        <strain>Isolate SAD P5/88</strain>
        <strain>Isolate SAD VA1</strain>
        <strain>Isolate SAD1-3670 var 1</strain>
        <strain>Isolate SAD1-3670 var 2</strain>
        <strain>Isolate SAG 2</strain>
    </source>
</reference>
<reference key="4">
    <citation type="journal article" date="2003" name="J. Virol.">
        <title>Dissociation of rabies virus matrix protein functions in regulation of viral RNA synthesis and virus assembly.</title>
        <authorList>
            <person name="Finke S."/>
            <person name="Conzelmann K.-K."/>
        </authorList>
    </citation>
    <scope>MUTAGENESIS OF ARG-58</scope>
</reference>
<reference key="5">
    <citation type="journal article" date="1999" name="J. Virol.">
        <title>Matrix protein of rabies virus is responsible for the assembly and budding of bullet-shaped particles and interacts with the transmembrane spike glycoprotein G.</title>
        <authorList>
            <person name="Mebatsion T."/>
            <person name="Weiland F."/>
            <person name="Conzelmann K.K."/>
        </authorList>
    </citation>
    <scope>FUNCTION</scope>
    <scope>INTERACTION WITH GLYCOPROTEIN</scope>
</reference>
<reference key="6">
    <citation type="journal article" date="1999" name="J. Virol.">
        <title>A proline-rich motif within the matrix protein of vesicular stomatitis virus and rabies virus interacts with WW domains of cellular proteins: implications for viral budding.</title>
        <authorList>
            <person name="Harty R.N."/>
            <person name="Paragas J."/>
            <person name="Sudol M."/>
            <person name="Palese P."/>
        </authorList>
    </citation>
    <scope>LATE-BUDDING DOMAIN</scope>
    <scope>MUTAGENESIS OF TYR-38</scope>
</reference>
<reference key="7">
    <citation type="journal article" date="2003" name="J. Gen. Virol.">
        <title>Rabies virus matrix protein regulates the balance of virus transcription and replication.</title>
        <authorList>
            <person name="Finke S."/>
            <person name="Mueller-Waldeck R."/>
            <person name="Conzelmann K.K."/>
        </authorList>
    </citation>
    <scope>FUNCTION</scope>
</reference>
<reference key="8">
    <citation type="journal article" date="2020" name="J. Biol. Chem.">
        <title>The ATPase ATP6V1A facilitates rabies virus replication by promoting virion uncoating and interacting with the viral matrix protein.</title>
        <authorList>
            <person name="Liu X."/>
            <person name="Li F."/>
            <person name="Zhang J."/>
            <person name="Wang L."/>
            <person name="Wang J."/>
            <person name="Wen Z."/>
            <person name="Wang Z."/>
            <person name="Shuai L."/>
            <person name="Wang X."/>
            <person name="Ge J."/>
            <person name="Zhao D."/>
            <person name="Bu Z."/>
        </authorList>
    </citation>
    <scope>FUNCTION</scope>
    <scope>SUBCELLULAR LOCATION</scope>
    <scope>INTERACTION WITH HOST ATP6V1A</scope>
</reference>